<reference key="1">
    <citation type="journal article" date="2007" name="PLoS Genet.">
        <title>The complete genome sequence of Yersinia pseudotuberculosis IP31758, the causative agent of Far East scarlet-like fever.</title>
        <authorList>
            <person name="Eppinger M."/>
            <person name="Rosovitz M.J."/>
            <person name="Fricke W.F."/>
            <person name="Rasko D.A."/>
            <person name="Kokorina G."/>
            <person name="Fayolle C."/>
            <person name="Lindler L.E."/>
            <person name="Carniel E."/>
            <person name="Ravel J."/>
        </authorList>
    </citation>
    <scope>NUCLEOTIDE SEQUENCE [LARGE SCALE GENOMIC DNA]</scope>
    <source>
        <strain>IP 31758</strain>
    </source>
</reference>
<gene>
    <name evidence="1" type="primary">maeA</name>
    <name type="ordered locus">YpsIP31758_2463</name>
</gene>
<organism>
    <name type="scientific">Yersinia pseudotuberculosis serotype O:1b (strain IP 31758)</name>
    <dbReference type="NCBI Taxonomy" id="349747"/>
    <lineage>
        <taxon>Bacteria</taxon>
        <taxon>Pseudomonadati</taxon>
        <taxon>Pseudomonadota</taxon>
        <taxon>Gammaproteobacteria</taxon>
        <taxon>Enterobacterales</taxon>
        <taxon>Yersiniaceae</taxon>
        <taxon>Yersinia</taxon>
    </lineage>
</organism>
<comment type="catalytic activity">
    <reaction evidence="1">
        <text>(S)-malate + NAD(+) = pyruvate + CO2 + NADH</text>
        <dbReference type="Rhea" id="RHEA:12653"/>
        <dbReference type="ChEBI" id="CHEBI:15361"/>
        <dbReference type="ChEBI" id="CHEBI:15589"/>
        <dbReference type="ChEBI" id="CHEBI:16526"/>
        <dbReference type="ChEBI" id="CHEBI:57540"/>
        <dbReference type="ChEBI" id="CHEBI:57945"/>
        <dbReference type="EC" id="1.1.1.38"/>
    </reaction>
</comment>
<comment type="catalytic activity">
    <reaction evidence="1">
        <text>oxaloacetate + H(+) = pyruvate + CO2</text>
        <dbReference type="Rhea" id="RHEA:15641"/>
        <dbReference type="ChEBI" id="CHEBI:15361"/>
        <dbReference type="ChEBI" id="CHEBI:15378"/>
        <dbReference type="ChEBI" id="CHEBI:16452"/>
        <dbReference type="ChEBI" id="CHEBI:16526"/>
        <dbReference type="EC" id="1.1.1.38"/>
    </reaction>
</comment>
<comment type="cofactor">
    <cofactor evidence="1">
        <name>Mg(2+)</name>
        <dbReference type="ChEBI" id="CHEBI:18420"/>
    </cofactor>
    <cofactor evidence="1">
        <name>Mn(2+)</name>
        <dbReference type="ChEBI" id="CHEBI:29035"/>
    </cofactor>
    <text evidence="1">Divalent metal cations. Prefers magnesium or manganese.</text>
</comment>
<comment type="subunit">
    <text evidence="1">Homotetramer.</text>
</comment>
<comment type="similarity">
    <text evidence="1">Belongs to the malic enzymes family.</text>
</comment>
<feature type="chain" id="PRO_1000069553" description="NAD-dependent malic enzyme">
    <location>
        <begin position="1"/>
        <end position="565"/>
    </location>
</feature>
<feature type="active site" description="Proton donor" evidence="1">
    <location>
        <position position="104"/>
    </location>
</feature>
<feature type="active site" description="Proton acceptor" evidence="1">
    <location>
        <position position="175"/>
    </location>
</feature>
<feature type="binding site" evidence="1">
    <location>
        <position position="157"/>
    </location>
    <ligand>
        <name>NAD(+)</name>
        <dbReference type="ChEBI" id="CHEBI:57540"/>
    </ligand>
</feature>
<feature type="binding site" evidence="1">
    <location>
        <position position="246"/>
    </location>
    <ligand>
        <name>a divalent metal cation</name>
        <dbReference type="ChEBI" id="CHEBI:60240"/>
    </ligand>
</feature>
<feature type="binding site" evidence="1">
    <location>
        <position position="247"/>
    </location>
    <ligand>
        <name>a divalent metal cation</name>
        <dbReference type="ChEBI" id="CHEBI:60240"/>
    </ligand>
</feature>
<feature type="binding site" evidence="1">
    <location>
        <position position="270"/>
    </location>
    <ligand>
        <name>a divalent metal cation</name>
        <dbReference type="ChEBI" id="CHEBI:60240"/>
    </ligand>
</feature>
<feature type="binding site" evidence="1">
    <location>
        <position position="270"/>
    </location>
    <ligand>
        <name>NAD(+)</name>
        <dbReference type="ChEBI" id="CHEBI:57540"/>
    </ligand>
</feature>
<feature type="binding site" evidence="1">
    <location>
        <position position="418"/>
    </location>
    <ligand>
        <name>NAD(+)</name>
        <dbReference type="ChEBI" id="CHEBI:57540"/>
    </ligand>
</feature>
<feature type="site" description="Important for activity" evidence="1">
    <location>
        <position position="270"/>
    </location>
</feature>
<sequence>MELEYESKRPLYIPYAGPILLEFPLLNKGSAFTNDERNHFNLHGLLPEAVETIEEQAERAYRQYQDFKNDDDKHIYLRNIQDTNETLFYRLLEAHLSEMMPIIYTPTVGEACEHFSDIYRRARGLFISYPNREHIDDMLQNATKQNVKVIVVTDGERILGLGDQGIGGMGIPIGKLSLYTACGGISPAYTLPVVLDVGTNNPQRLNDPLYMGWRHPRISGDEYYAFVDEFIQAVKRRWPNVLLQFEDFAQKNATPLLNRYRDELCCFNDDIQGTAAVTLGSLIAASHAAGSQLRDQTVTFLGAGSAGCGIAEQIIAQMMSEGLSEIQARARIFMVDRFGLLTDKLPNLLDFQSKLVQKSDDLHHWNLHNDAISLLDVVRNAKPTVLIGVSGQPGLFTEELIREMHSHCARPIVMPLSNPTSRVEARPEDIINWTDGAALVATGSPFPPVSYKEKLYPIAQCNNSYIFPGIGLGVLASGASRVTDGMLMAASRALAESSPLARHGEGALLPNIDDIQAVSKAIAMRVGQAAQLQGVAIVTSEEALSKAIEHNYWQPQYRSYKRTSF</sequence>
<accession>A7FJK4</accession>
<dbReference type="EC" id="1.1.1.38" evidence="1"/>
<dbReference type="EMBL" id="CP000720">
    <property type="protein sequence ID" value="ABS46566.1"/>
    <property type="molecule type" value="Genomic_DNA"/>
</dbReference>
<dbReference type="RefSeq" id="WP_002211968.1">
    <property type="nucleotide sequence ID" value="NC_009708.1"/>
</dbReference>
<dbReference type="SMR" id="A7FJK4"/>
<dbReference type="KEGG" id="ypi:YpsIP31758_2463"/>
<dbReference type="HOGENOM" id="CLU_011405_5_2_6"/>
<dbReference type="Proteomes" id="UP000002412">
    <property type="component" value="Chromosome"/>
</dbReference>
<dbReference type="GO" id="GO:0005829">
    <property type="term" value="C:cytosol"/>
    <property type="evidence" value="ECO:0007669"/>
    <property type="project" value="TreeGrafter"/>
</dbReference>
<dbReference type="GO" id="GO:0004471">
    <property type="term" value="F:malate dehydrogenase (decarboxylating) (NAD+) activity"/>
    <property type="evidence" value="ECO:0007669"/>
    <property type="project" value="UniProtKB-UniRule"/>
</dbReference>
<dbReference type="GO" id="GO:0046872">
    <property type="term" value="F:metal ion binding"/>
    <property type="evidence" value="ECO:0007669"/>
    <property type="project" value="UniProtKB-KW"/>
</dbReference>
<dbReference type="GO" id="GO:0051287">
    <property type="term" value="F:NAD binding"/>
    <property type="evidence" value="ECO:0007669"/>
    <property type="project" value="InterPro"/>
</dbReference>
<dbReference type="GO" id="GO:0008948">
    <property type="term" value="F:oxaloacetate decarboxylase activity"/>
    <property type="evidence" value="ECO:0007669"/>
    <property type="project" value="UniProtKB-UniRule"/>
</dbReference>
<dbReference type="GO" id="GO:0006108">
    <property type="term" value="P:malate metabolic process"/>
    <property type="evidence" value="ECO:0007669"/>
    <property type="project" value="TreeGrafter"/>
</dbReference>
<dbReference type="CDD" id="cd05312">
    <property type="entry name" value="NAD_bind_1_malic_enz"/>
    <property type="match status" value="1"/>
</dbReference>
<dbReference type="FunFam" id="3.40.50.10380:FF:000001">
    <property type="entry name" value="NAD-dependent malic enzyme"/>
    <property type="match status" value="1"/>
</dbReference>
<dbReference type="FunFam" id="3.40.50.720:FF:000055">
    <property type="entry name" value="NAD-dependent malic enzyme"/>
    <property type="match status" value="1"/>
</dbReference>
<dbReference type="Gene3D" id="3.40.50.10380">
    <property type="entry name" value="Malic enzyme, N-terminal domain"/>
    <property type="match status" value="1"/>
</dbReference>
<dbReference type="Gene3D" id="3.40.50.720">
    <property type="entry name" value="NAD(P)-binding Rossmann-like Domain"/>
    <property type="match status" value="1"/>
</dbReference>
<dbReference type="HAMAP" id="MF_01619">
    <property type="entry name" value="NAD_malic_enz"/>
    <property type="match status" value="1"/>
</dbReference>
<dbReference type="InterPro" id="IPR046346">
    <property type="entry name" value="Aminoacid_DH-like_N_sf"/>
</dbReference>
<dbReference type="InterPro" id="IPR015884">
    <property type="entry name" value="Malic_enzyme_CS"/>
</dbReference>
<dbReference type="InterPro" id="IPR012301">
    <property type="entry name" value="Malic_N_dom"/>
</dbReference>
<dbReference type="InterPro" id="IPR037062">
    <property type="entry name" value="Malic_N_dom_sf"/>
</dbReference>
<dbReference type="InterPro" id="IPR012302">
    <property type="entry name" value="Malic_NAD-bd"/>
</dbReference>
<dbReference type="InterPro" id="IPR001891">
    <property type="entry name" value="Malic_OxRdtase"/>
</dbReference>
<dbReference type="InterPro" id="IPR036291">
    <property type="entry name" value="NAD(P)-bd_dom_sf"/>
</dbReference>
<dbReference type="InterPro" id="IPR023667">
    <property type="entry name" value="NAD_malic_enz_proteobac"/>
</dbReference>
<dbReference type="NCBIfam" id="NF010052">
    <property type="entry name" value="PRK13529.1"/>
    <property type="match status" value="1"/>
</dbReference>
<dbReference type="PANTHER" id="PTHR23406">
    <property type="entry name" value="MALIC ENZYME-RELATED"/>
    <property type="match status" value="1"/>
</dbReference>
<dbReference type="PANTHER" id="PTHR23406:SF34">
    <property type="entry name" value="NAD-DEPENDENT MALIC ENZYME, MITOCHONDRIAL"/>
    <property type="match status" value="1"/>
</dbReference>
<dbReference type="Pfam" id="PF00390">
    <property type="entry name" value="malic"/>
    <property type="match status" value="1"/>
</dbReference>
<dbReference type="Pfam" id="PF03949">
    <property type="entry name" value="Malic_M"/>
    <property type="match status" value="1"/>
</dbReference>
<dbReference type="PIRSF" id="PIRSF000106">
    <property type="entry name" value="ME"/>
    <property type="match status" value="1"/>
</dbReference>
<dbReference type="PRINTS" id="PR00072">
    <property type="entry name" value="MALOXRDTASE"/>
</dbReference>
<dbReference type="SMART" id="SM01274">
    <property type="entry name" value="malic"/>
    <property type="match status" value="1"/>
</dbReference>
<dbReference type="SMART" id="SM00919">
    <property type="entry name" value="Malic_M"/>
    <property type="match status" value="1"/>
</dbReference>
<dbReference type="SUPFAM" id="SSF53223">
    <property type="entry name" value="Aminoacid dehydrogenase-like, N-terminal domain"/>
    <property type="match status" value="1"/>
</dbReference>
<dbReference type="SUPFAM" id="SSF51735">
    <property type="entry name" value="NAD(P)-binding Rossmann-fold domains"/>
    <property type="match status" value="1"/>
</dbReference>
<dbReference type="PROSITE" id="PS00331">
    <property type="entry name" value="MALIC_ENZYMES"/>
    <property type="match status" value="1"/>
</dbReference>
<proteinExistence type="inferred from homology"/>
<keyword id="KW-0479">Metal-binding</keyword>
<keyword id="KW-0520">NAD</keyword>
<keyword id="KW-0560">Oxidoreductase</keyword>
<evidence type="ECO:0000255" key="1">
    <source>
        <dbReference type="HAMAP-Rule" id="MF_01619"/>
    </source>
</evidence>
<protein>
    <recommendedName>
        <fullName evidence="1">NAD-dependent malic enzyme</fullName>
        <shortName evidence="1">NAD-ME</shortName>
        <ecNumber evidence="1">1.1.1.38</ecNumber>
    </recommendedName>
</protein>
<name>MAO1_YERP3</name>